<reference key="1">
    <citation type="journal article" date="2001" name="Nature">
        <title>Genome sequence and gene compaction of the eukaryote parasite Encephalitozoon cuniculi.</title>
        <authorList>
            <person name="Katinka M.D."/>
            <person name="Duprat S."/>
            <person name="Cornillot E."/>
            <person name="Metenier G."/>
            <person name="Thomarat F."/>
            <person name="Prensier G."/>
            <person name="Barbe V."/>
            <person name="Peyretaillade E."/>
            <person name="Brottier P."/>
            <person name="Wincker P."/>
            <person name="Delbac F."/>
            <person name="El Alaoui H."/>
            <person name="Peyret P."/>
            <person name="Saurin W."/>
            <person name="Gouy M."/>
            <person name="Weissenbach J."/>
            <person name="Vivares C.P."/>
        </authorList>
    </citation>
    <scope>NUCLEOTIDE SEQUENCE [LARGE SCALE GENOMIC DNA]</scope>
    <source>
        <strain>GB-M1</strain>
    </source>
</reference>
<name>Y209_ENCCU</name>
<sequence length="258" mass="29674">MAVTQGIDAHTINQQHRIVIRNFSSFVSLIFTFFACYTFSEHDFKEDLFFRFIVLLPSFSYLILQYLIFFHTTWKGYCKTESTLRNILHSTLIVLLLAFVIINIFSSITFVTDKWNSEDLFFYSIILPSFFIPPTYLLSTSCDFITTSFTATGINILVDLMILLSYLTFLLLLLFLEKAEYRPYFILASFVLILVKSLKEIYLPSRESSSPAASWRVIIFALVFTLAVITHSLSAYVSISTLARYFRLSATGEVLSIS</sequence>
<gene>
    <name type="ordered locus">ECU02_0090</name>
</gene>
<protein>
    <recommendedName>
        <fullName>UPF0328 protein ECU02_0090</fullName>
    </recommendedName>
</protein>
<proteinExistence type="inferred from homology"/>
<keyword id="KW-1185">Reference proteome</keyword>
<organism>
    <name type="scientific">Encephalitozoon cuniculi (strain GB-M1)</name>
    <name type="common">Microsporidian parasite</name>
    <dbReference type="NCBI Taxonomy" id="284813"/>
    <lineage>
        <taxon>Eukaryota</taxon>
        <taxon>Fungi</taxon>
        <taxon>Fungi incertae sedis</taxon>
        <taxon>Microsporidia</taxon>
        <taxon>Unikaryonidae</taxon>
        <taxon>Encephalitozoon</taxon>
    </lineage>
</organism>
<accession>Q8SWH3</accession>
<evidence type="ECO:0000305" key="1"/>
<feature type="chain" id="PRO_0000223113" description="UPF0328 protein ECU02_0090">
    <location>
        <begin position="1"/>
        <end position="258"/>
    </location>
</feature>
<comment type="similarity">
    <text evidence="1">Belongs to the UPF0328 family.</text>
</comment>
<dbReference type="EMBL" id="AL590442">
    <property type="protein sequence ID" value="CAD25040.1"/>
    <property type="molecule type" value="Genomic_DNA"/>
</dbReference>
<dbReference type="RefSeq" id="NP_584536.1">
    <property type="nucleotide sequence ID" value="NM_001040725.1"/>
</dbReference>
<dbReference type="GeneID" id="858526"/>
<dbReference type="KEGG" id="ecu:ECU02_0090"/>
<dbReference type="VEuPathDB" id="MicrosporidiaDB:ECU02_0090"/>
<dbReference type="HOGENOM" id="CLU_059413_0_0_1"/>
<dbReference type="InParanoid" id="Q8SWH3"/>
<dbReference type="Proteomes" id="UP000000819">
    <property type="component" value="Chromosome II"/>
</dbReference>
<dbReference type="InterPro" id="IPR019081">
    <property type="entry name" value="UPF0328"/>
</dbReference>
<dbReference type="Pfam" id="PF09591">
    <property type="entry name" value="DUF2463"/>
    <property type="match status" value="1"/>
</dbReference>